<protein>
    <recommendedName>
        <fullName evidence="1">Large ribosomal subunit protein bL31</fullName>
    </recommendedName>
    <alternativeName>
        <fullName evidence="2">50S ribosomal protein L31</fullName>
    </alternativeName>
</protein>
<reference key="1">
    <citation type="submission" date="2008-01" db="EMBL/GenBank/DDBJ databases">
        <title>Complete sequence of Thermoanaerobacter sp. X514.</title>
        <authorList>
            <consortium name="US DOE Joint Genome Institute"/>
            <person name="Copeland A."/>
            <person name="Lucas S."/>
            <person name="Lapidus A."/>
            <person name="Barry K."/>
            <person name="Glavina del Rio T."/>
            <person name="Dalin E."/>
            <person name="Tice H."/>
            <person name="Pitluck S."/>
            <person name="Bruce D."/>
            <person name="Goodwin L."/>
            <person name="Saunders E."/>
            <person name="Brettin T."/>
            <person name="Detter J.C."/>
            <person name="Han C."/>
            <person name="Schmutz J."/>
            <person name="Larimer F."/>
            <person name="Land M."/>
            <person name="Hauser L."/>
            <person name="Kyrpides N."/>
            <person name="Kim E."/>
            <person name="Hemme C."/>
            <person name="Fields M.W."/>
            <person name="He Z."/>
            <person name="Zhou J."/>
            <person name="Richardson P."/>
        </authorList>
    </citation>
    <scope>NUCLEOTIDE SEQUENCE [LARGE SCALE GENOMIC DNA]</scope>
    <source>
        <strain>X514</strain>
    </source>
</reference>
<name>RL31_THEPX</name>
<proteinExistence type="inferred from homology"/>
<evidence type="ECO:0000255" key="1">
    <source>
        <dbReference type="HAMAP-Rule" id="MF_00501"/>
    </source>
</evidence>
<evidence type="ECO:0000305" key="2"/>
<comment type="function">
    <text evidence="1">Binds the 23S rRNA.</text>
</comment>
<comment type="cofactor">
    <cofactor evidence="1">
        <name>Zn(2+)</name>
        <dbReference type="ChEBI" id="CHEBI:29105"/>
    </cofactor>
    <text evidence="1">Binds 1 zinc ion per subunit.</text>
</comment>
<comment type="subunit">
    <text evidence="1">Part of the 50S ribosomal subunit.</text>
</comment>
<comment type="similarity">
    <text evidence="1">Belongs to the bacterial ribosomal protein bL31 family. Type A subfamily.</text>
</comment>
<dbReference type="EMBL" id="CP000923">
    <property type="protein sequence ID" value="ABY91412.1"/>
    <property type="molecule type" value="Genomic_DNA"/>
</dbReference>
<dbReference type="RefSeq" id="WP_003867319.1">
    <property type="nucleotide sequence ID" value="NC_010320.1"/>
</dbReference>
<dbReference type="SMR" id="B0K1F3"/>
<dbReference type="KEGG" id="tex:Teth514_0090"/>
<dbReference type="HOGENOM" id="CLU_114306_4_3_9"/>
<dbReference type="Proteomes" id="UP000002155">
    <property type="component" value="Chromosome"/>
</dbReference>
<dbReference type="GO" id="GO:1990904">
    <property type="term" value="C:ribonucleoprotein complex"/>
    <property type="evidence" value="ECO:0007669"/>
    <property type="project" value="UniProtKB-KW"/>
</dbReference>
<dbReference type="GO" id="GO:0005840">
    <property type="term" value="C:ribosome"/>
    <property type="evidence" value="ECO:0007669"/>
    <property type="project" value="UniProtKB-KW"/>
</dbReference>
<dbReference type="GO" id="GO:0046872">
    <property type="term" value="F:metal ion binding"/>
    <property type="evidence" value="ECO:0007669"/>
    <property type="project" value="UniProtKB-KW"/>
</dbReference>
<dbReference type="GO" id="GO:0019843">
    <property type="term" value="F:rRNA binding"/>
    <property type="evidence" value="ECO:0007669"/>
    <property type="project" value="UniProtKB-KW"/>
</dbReference>
<dbReference type="GO" id="GO:0003735">
    <property type="term" value="F:structural constituent of ribosome"/>
    <property type="evidence" value="ECO:0007669"/>
    <property type="project" value="InterPro"/>
</dbReference>
<dbReference type="GO" id="GO:0006412">
    <property type="term" value="P:translation"/>
    <property type="evidence" value="ECO:0007669"/>
    <property type="project" value="UniProtKB-UniRule"/>
</dbReference>
<dbReference type="Gene3D" id="4.10.830.30">
    <property type="entry name" value="Ribosomal protein L31"/>
    <property type="match status" value="1"/>
</dbReference>
<dbReference type="HAMAP" id="MF_00501">
    <property type="entry name" value="Ribosomal_bL31_1"/>
    <property type="match status" value="1"/>
</dbReference>
<dbReference type="InterPro" id="IPR034704">
    <property type="entry name" value="Ribosomal_bL28/bL31-like_sf"/>
</dbReference>
<dbReference type="InterPro" id="IPR002150">
    <property type="entry name" value="Ribosomal_bL31"/>
</dbReference>
<dbReference type="InterPro" id="IPR027491">
    <property type="entry name" value="Ribosomal_bL31_A"/>
</dbReference>
<dbReference type="InterPro" id="IPR042105">
    <property type="entry name" value="Ribosomal_bL31_sf"/>
</dbReference>
<dbReference type="NCBIfam" id="TIGR00105">
    <property type="entry name" value="L31"/>
    <property type="match status" value="1"/>
</dbReference>
<dbReference type="NCBIfam" id="NF000612">
    <property type="entry name" value="PRK00019.1"/>
    <property type="match status" value="1"/>
</dbReference>
<dbReference type="NCBIfam" id="NF001809">
    <property type="entry name" value="PRK00528.1"/>
    <property type="match status" value="1"/>
</dbReference>
<dbReference type="PANTHER" id="PTHR33280">
    <property type="entry name" value="50S RIBOSOMAL PROTEIN L31, CHLOROPLASTIC"/>
    <property type="match status" value="1"/>
</dbReference>
<dbReference type="PANTHER" id="PTHR33280:SF1">
    <property type="entry name" value="LARGE RIBOSOMAL SUBUNIT PROTEIN BL31C"/>
    <property type="match status" value="1"/>
</dbReference>
<dbReference type="Pfam" id="PF01197">
    <property type="entry name" value="Ribosomal_L31"/>
    <property type="match status" value="1"/>
</dbReference>
<dbReference type="PRINTS" id="PR01249">
    <property type="entry name" value="RIBOSOMALL31"/>
</dbReference>
<dbReference type="SUPFAM" id="SSF143800">
    <property type="entry name" value="L28p-like"/>
    <property type="match status" value="1"/>
</dbReference>
<dbReference type="PROSITE" id="PS01143">
    <property type="entry name" value="RIBOSOMAL_L31"/>
    <property type="match status" value="1"/>
</dbReference>
<organism>
    <name type="scientific">Thermoanaerobacter sp. (strain X514)</name>
    <dbReference type="NCBI Taxonomy" id="399726"/>
    <lineage>
        <taxon>Bacteria</taxon>
        <taxon>Bacillati</taxon>
        <taxon>Bacillota</taxon>
        <taxon>Clostridia</taxon>
        <taxon>Thermoanaerobacterales</taxon>
        <taxon>Thermoanaerobacteraceae</taxon>
        <taxon>Thermoanaerobacter</taxon>
    </lineage>
</organism>
<sequence>MKPNIHPTYYHDAVVRCACGNTFITGSTKKEIRVEICSKCHPFFTGQQKIVDTGGRVERFRKRFNLEEK</sequence>
<accession>B0K1F3</accession>
<gene>
    <name evidence="1" type="primary">rpmE</name>
    <name type="ordered locus">Teth514_0090</name>
</gene>
<keyword id="KW-0479">Metal-binding</keyword>
<keyword id="KW-0687">Ribonucleoprotein</keyword>
<keyword id="KW-0689">Ribosomal protein</keyword>
<keyword id="KW-0694">RNA-binding</keyword>
<keyword id="KW-0699">rRNA-binding</keyword>
<keyword id="KW-0862">Zinc</keyword>
<feature type="chain" id="PRO_1000126758" description="Large ribosomal subunit protein bL31">
    <location>
        <begin position="1"/>
        <end position="69"/>
    </location>
</feature>
<feature type="binding site" evidence="1">
    <location>
        <position position="17"/>
    </location>
    <ligand>
        <name>Zn(2+)</name>
        <dbReference type="ChEBI" id="CHEBI:29105"/>
    </ligand>
</feature>
<feature type="binding site" evidence="1">
    <location>
        <position position="19"/>
    </location>
    <ligand>
        <name>Zn(2+)</name>
        <dbReference type="ChEBI" id="CHEBI:29105"/>
    </ligand>
</feature>
<feature type="binding site" evidence="1">
    <location>
        <position position="37"/>
    </location>
    <ligand>
        <name>Zn(2+)</name>
        <dbReference type="ChEBI" id="CHEBI:29105"/>
    </ligand>
</feature>
<feature type="binding site" evidence="1">
    <location>
        <position position="40"/>
    </location>
    <ligand>
        <name>Zn(2+)</name>
        <dbReference type="ChEBI" id="CHEBI:29105"/>
    </ligand>
</feature>